<sequence length="719" mass="73717">MATSPAEPSAGPAARGEAAAATEEQEEEARQLLQTLQAAEGEAAAAGAGDAAAAADSGSPSGPGSPRETVTEVPTGLRFSPEQVACVCEALLQAGHAGRLSRFLGALPPAERLRGSDPVLRARALVAFQRGEYAELYQLLESRPFPAAHHAFLQDLYLRARYHEAERARGRALGAVDKYRLRKKFPLPKTIWDGEETVYCFKERSRAALKACYRGNRYPTPDEKRRLATLTGLSLTQVSNWFKNRRQRDRTGTGGGAPCKSESDGNPTTEDESSRSPEDLERGVASMAAEAPAQSSIFLAGATSPATCPASSSILVNGSFLAASSPPAVLLNGSPVIINSLALGENSSLGPLLLTGGSAPQPQPSLQGVSEAKNSLVLDPQTGEVRLDEAQSEAPETKGVHGTTGEEIPGALPQVVPGPPPASTFPLTPGAVPAVAAPQVVPLSPSSGYPTGLSPTSPRLNLPQVVPTSQVVTLPQAVGPLQLLAAGPGSPVKVAAAAGPTNVHLINSSVGVTALQLPSSTAPGNFLLANPVSGSPIVTGVAVQQGKIILTATFPTSMLVSQVLPPAPSLALPLKQEPAITVPEGALPVGPSPTLPEGHTLGPISTQPLPPASVVTSGTSLPFSPDSSGLLSSFSAPLPEGLMLSPAAVPVWPAGLELSTGVEGLGTQATHTVLRLPDPDPQGLLLGATTGTEVDEGLEAEAKVLTQLQSVPVEEPLEL</sequence>
<protein>
    <recommendedName>
        <fullName>Homeobox protein SIX5</fullName>
    </recommendedName>
    <alternativeName>
        <fullName>DM locus-associated homeodomain protein homolog</fullName>
    </alternativeName>
    <alternativeName>
        <fullName>Sine oculis homeobox homolog 5</fullName>
    </alternativeName>
</protein>
<dbReference type="EMBL" id="AC145199">
    <property type="status" value="NOT_ANNOTATED_CDS"/>
    <property type="molecule type" value="Genomic_DNA"/>
</dbReference>
<dbReference type="EMBL" id="D83146">
    <property type="protein sequence ID" value="BAA11824.1"/>
    <property type="molecule type" value="mRNA"/>
</dbReference>
<dbReference type="CCDS" id="CCDS20889.1"/>
<dbReference type="PIR" id="S74254">
    <property type="entry name" value="S74254"/>
</dbReference>
<dbReference type="RefSeq" id="NP_035513.1">
    <property type="nucleotide sequence ID" value="NM_011383.1"/>
</dbReference>
<dbReference type="SMR" id="P70178"/>
<dbReference type="BioGRID" id="203263">
    <property type="interactions" value="1"/>
</dbReference>
<dbReference type="FunCoup" id="P70178">
    <property type="interactions" value="790"/>
</dbReference>
<dbReference type="IntAct" id="P70178">
    <property type="interactions" value="2"/>
</dbReference>
<dbReference type="STRING" id="10090.ENSMUSP00000045973"/>
<dbReference type="iPTMnet" id="P70178"/>
<dbReference type="PhosphoSitePlus" id="P70178"/>
<dbReference type="PaxDb" id="10090-ENSMUSP00000045973"/>
<dbReference type="ProteomicsDB" id="261180"/>
<dbReference type="Pumba" id="P70178"/>
<dbReference type="Antibodypedia" id="31386">
    <property type="antibodies" value="182 antibodies from 28 providers"/>
</dbReference>
<dbReference type="DNASU" id="20475"/>
<dbReference type="Ensembl" id="ENSMUST00000049454.6">
    <property type="protein sequence ID" value="ENSMUSP00000045973.6"/>
    <property type="gene ID" value="ENSMUSG00000040841.6"/>
</dbReference>
<dbReference type="GeneID" id="20475"/>
<dbReference type="KEGG" id="mmu:20475"/>
<dbReference type="UCSC" id="uc009fkr.1">
    <property type="organism name" value="mouse"/>
</dbReference>
<dbReference type="AGR" id="MGI:106220"/>
<dbReference type="CTD" id="147912"/>
<dbReference type="MGI" id="MGI:106220">
    <property type="gene designation" value="Six5"/>
</dbReference>
<dbReference type="VEuPathDB" id="HostDB:ENSMUSG00000040841"/>
<dbReference type="eggNOG" id="KOG0775">
    <property type="taxonomic scope" value="Eukaryota"/>
</dbReference>
<dbReference type="GeneTree" id="ENSGT00940000162237"/>
<dbReference type="HOGENOM" id="CLU_022250_0_0_1"/>
<dbReference type="InParanoid" id="P70178"/>
<dbReference type="OMA" id="AAMPIWP"/>
<dbReference type="OrthoDB" id="6159439at2759"/>
<dbReference type="PhylomeDB" id="P70178"/>
<dbReference type="TreeFam" id="TF315545"/>
<dbReference type="BioGRID-ORCS" id="20475">
    <property type="hits" value="4 hits in 78 CRISPR screens"/>
</dbReference>
<dbReference type="ChiTaRS" id="Six5">
    <property type="organism name" value="mouse"/>
</dbReference>
<dbReference type="PRO" id="PR:P70178"/>
<dbReference type="Proteomes" id="UP000000589">
    <property type="component" value="Chromosome 7"/>
</dbReference>
<dbReference type="RNAct" id="P70178">
    <property type="molecule type" value="protein"/>
</dbReference>
<dbReference type="Bgee" id="ENSMUSG00000040841">
    <property type="expression patterns" value="Expressed in ascending aorta and 192 other cell types or tissues"/>
</dbReference>
<dbReference type="GO" id="GO:0005829">
    <property type="term" value="C:cytosol"/>
    <property type="evidence" value="ECO:0007669"/>
    <property type="project" value="Ensembl"/>
</dbReference>
<dbReference type="GO" id="GO:0005794">
    <property type="term" value="C:Golgi apparatus"/>
    <property type="evidence" value="ECO:0007669"/>
    <property type="project" value="Ensembl"/>
</dbReference>
<dbReference type="GO" id="GO:0005654">
    <property type="term" value="C:nucleoplasm"/>
    <property type="evidence" value="ECO:0007669"/>
    <property type="project" value="Ensembl"/>
</dbReference>
<dbReference type="GO" id="GO:0005634">
    <property type="term" value="C:nucleus"/>
    <property type="evidence" value="ECO:0000314"/>
    <property type="project" value="MGI"/>
</dbReference>
<dbReference type="GO" id="GO:0003677">
    <property type="term" value="F:DNA binding"/>
    <property type="evidence" value="ECO:0000314"/>
    <property type="project" value="MGI"/>
</dbReference>
<dbReference type="GO" id="GO:0001228">
    <property type="term" value="F:DNA-binding transcription activator activity, RNA polymerase II-specific"/>
    <property type="evidence" value="ECO:0000314"/>
    <property type="project" value="NTNU_SB"/>
</dbReference>
<dbReference type="GO" id="GO:0000978">
    <property type="term" value="F:RNA polymerase II cis-regulatory region sequence-specific DNA binding"/>
    <property type="evidence" value="ECO:0000314"/>
    <property type="project" value="NTNU_SB"/>
</dbReference>
<dbReference type="GO" id="GO:0043565">
    <property type="term" value="F:sequence-specific DNA binding"/>
    <property type="evidence" value="ECO:0000314"/>
    <property type="project" value="MGI"/>
</dbReference>
<dbReference type="GO" id="GO:0008283">
    <property type="term" value="P:cell population proliferation"/>
    <property type="evidence" value="ECO:0000315"/>
    <property type="project" value="MGI"/>
</dbReference>
<dbReference type="GO" id="GO:0002088">
    <property type="term" value="P:lens development in camera-type eye"/>
    <property type="evidence" value="ECO:0000315"/>
    <property type="project" value="MGI"/>
</dbReference>
<dbReference type="GO" id="GO:0160024">
    <property type="term" value="P:Leydig cell proliferation"/>
    <property type="evidence" value="ECO:0000315"/>
    <property type="project" value="MGI"/>
</dbReference>
<dbReference type="GO" id="GO:0008285">
    <property type="term" value="P:negative regulation of cell population proliferation"/>
    <property type="evidence" value="ECO:0000315"/>
    <property type="project" value="MGI"/>
</dbReference>
<dbReference type="GO" id="GO:0045892">
    <property type="term" value="P:negative regulation of DNA-templated transcription"/>
    <property type="evidence" value="ECO:0000314"/>
    <property type="project" value="UniProtKB"/>
</dbReference>
<dbReference type="GO" id="GO:1902723">
    <property type="term" value="P:negative regulation of skeletal muscle satellite cell proliferation"/>
    <property type="evidence" value="ECO:0000315"/>
    <property type="project" value="UniProtKB"/>
</dbReference>
<dbReference type="GO" id="GO:0045944">
    <property type="term" value="P:positive regulation of transcription by RNA polymerase II"/>
    <property type="evidence" value="ECO:0000314"/>
    <property type="project" value="NTNU_SB"/>
</dbReference>
<dbReference type="GO" id="GO:0007286">
    <property type="term" value="P:spermatid development"/>
    <property type="evidence" value="ECO:0000315"/>
    <property type="project" value="MGI"/>
</dbReference>
<dbReference type="CDD" id="cd00086">
    <property type="entry name" value="homeodomain"/>
    <property type="match status" value="1"/>
</dbReference>
<dbReference type="FunFam" id="1.10.10.60:FF:000085">
    <property type="entry name" value="SIX homeobox 5"/>
    <property type="match status" value="1"/>
</dbReference>
<dbReference type="Gene3D" id="1.10.10.60">
    <property type="entry name" value="Homeodomain-like"/>
    <property type="match status" value="1"/>
</dbReference>
<dbReference type="InterPro" id="IPR001356">
    <property type="entry name" value="HD"/>
</dbReference>
<dbReference type="InterPro" id="IPR017970">
    <property type="entry name" value="Homeobox_CS"/>
</dbReference>
<dbReference type="InterPro" id="IPR009057">
    <property type="entry name" value="Homeodomain-like_sf"/>
</dbReference>
<dbReference type="InterPro" id="IPR031701">
    <property type="entry name" value="SIX1_SD"/>
</dbReference>
<dbReference type="PANTHER" id="PTHR10390">
    <property type="entry name" value="HOMEOBOX PROTEIN SIX"/>
    <property type="match status" value="1"/>
</dbReference>
<dbReference type="PANTHER" id="PTHR10390:SF40">
    <property type="entry name" value="HOMEOBOX PROTEIN SIX5"/>
    <property type="match status" value="1"/>
</dbReference>
<dbReference type="Pfam" id="PF00046">
    <property type="entry name" value="Homeodomain"/>
    <property type="match status" value="1"/>
</dbReference>
<dbReference type="Pfam" id="PF16878">
    <property type="entry name" value="SIX1_SD"/>
    <property type="match status" value="1"/>
</dbReference>
<dbReference type="SMART" id="SM00389">
    <property type="entry name" value="HOX"/>
    <property type="match status" value="1"/>
</dbReference>
<dbReference type="SUPFAM" id="SSF46689">
    <property type="entry name" value="Homeodomain-like"/>
    <property type="match status" value="1"/>
</dbReference>
<dbReference type="PROSITE" id="PS00027">
    <property type="entry name" value="HOMEOBOX_1"/>
    <property type="match status" value="1"/>
</dbReference>
<dbReference type="PROSITE" id="PS50071">
    <property type="entry name" value="HOMEOBOX_2"/>
    <property type="match status" value="1"/>
</dbReference>
<accession>P70178</accession>
<evidence type="ECO:0000250" key="1"/>
<evidence type="ECO:0000255" key="2">
    <source>
        <dbReference type="PROSITE-ProRule" id="PRU00108"/>
    </source>
</evidence>
<evidence type="ECO:0000256" key="3">
    <source>
        <dbReference type="SAM" id="MobiDB-lite"/>
    </source>
</evidence>
<evidence type="ECO:0000269" key="4">
    <source>
    </source>
</evidence>
<evidence type="ECO:0000269" key="5">
    <source>
    </source>
</evidence>
<evidence type="ECO:0000305" key="6"/>
<reference key="1">
    <citation type="journal article" date="2009" name="PLoS Biol.">
        <title>Lineage-specific biology revealed by a finished genome assembly of the mouse.</title>
        <authorList>
            <person name="Church D.M."/>
            <person name="Goodstadt L."/>
            <person name="Hillier L.W."/>
            <person name="Zody M.C."/>
            <person name="Goldstein S."/>
            <person name="She X."/>
            <person name="Bult C.J."/>
            <person name="Agarwala R."/>
            <person name="Cherry J.L."/>
            <person name="DiCuccio M."/>
            <person name="Hlavina W."/>
            <person name="Kapustin Y."/>
            <person name="Meric P."/>
            <person name="Maglott D."/>
            <person name="Birtle Z."/>
            <person name="Marques A.C."/>
            <person name="Graves T."/>
            <person name="Zhou S."/>
            <person name="Teague B."/>
            <person name="Potamousis K."/>
            <person name="Churas C."/>
            <person name="Place M."/>
            <person name="Herschleb J."/>
            <person name="Runnheim R."/>
            <person name="Forrest D."/>
            <person name="Amos-Landgraf J."/>
            <person name="Schwartz D.C."/>
            <person name="Cheng Z."/>
            <person name="Lindblad-Toh K."/>
            <person name="Eichler E.E."/>
            <person name="Ponting C.P."/>
        </authorList>
    </citation>
    <scope>NUCLEOTIDE SEQUENCE [LARGE SCALE GENOMIC DNA]</scope>
    <source>
        <strain>C57BL/6J</strain>
    </source>
</reference>
<reference key="2">
    <citation type="journal article" date="1996" name="FEBS Lett.">
        <title>Identification and expression of Six family genes in mouse retina.</title>
        <authorList>
            <person name="Kawakami K."/>
            <person name="Ohto H."/>
            <person name="Takizawa T."/>
            <person name="Saito T."/>
        </authorList>
    </citation>
    <scope>NUCLEOTIDE SEQUENCE [MRNA] OF 53-719</scope>
    <scope>DNA-BINDING</scope>
    <source>
        <strain>BALB/cJ</strain>
        <tissue>Retina</tissue>
    </source>
</reference>
<reference key="3">
    <citation type="journal article" date="1999" name="Mol. Cell. Biol.">
        <title>Cooperation of six and eya in activation of their target genes through nuclear translocation of Eya.</title>
        <authorList>
            <person name="Ohto H."/>
            <person name="Kamada S."/>
            <person name="Tago K."/>
            <person name="Tominaga S."/>
            <person name="Ozaki H."/>
            <person name="Sato S."/>
            <person name="Kawakami K."/>
        </authorList>
    </citation>
    <scope>FUNCTION</scope>
    <scope>INTERACTION WITH EYA1; EYA2 AND EYA3</scope>
</reference>
<reference key="4">
    <citation type="journal article" date="2002" name="Hum. Mol. Genet.">
        <title>Identification of transcriptional targets for Six5: implication for the pathogenesis of myotonic dystrophy type 1.</title>
        <authorList>
            <person name="Sato S."/>
            <person name="Nakamura M."/>
            <person name="Cho D.H."/>
            <person name="Tapscott S.J."/>
            <person name="Ozaki H."/>
            <person name="Kawakami K."/>
        </authorList>
    </citation>
    <scope>DNA-BINDING</scope>
</reference>
<reference key="5">
    <citation type="journal article" date="2002" name="Mol. Cell. Biol.">
        <title>Molecular interaction and synergistic activation of a promoter by Six, Eya, and Dach proteins mediated through CREB binding protein.</title>
        <authorList>
            <person name="Ikeda K."/>
            <person name="Watanabe Y."/>
            <person name="Ohto H."/>
            <person name="Kawakami K."/>
        </authorList>
    </citation>
    <scope>INTERACTION WITH EYA3</scope>
</reference>
<organism>
    <name type="scientific">Mus musculus</name>
    <name type="common">Mouse</name>
    <dbReference type="NCBI Taxonomy" id="10090"/>
    <lineage>
        <taxon>Eukaryota</taxon>
        <taxon>Metazoa</taxon>
        <taxon>Chordata</taxon>
        <taxon>Craniata</taxon>
        <taxon>Vertebrata</taxon>
        <taxon>Euteleostomi</taxon>
        <taxon>Mammalia</taxon>
        <taxon>Eutheria</taxon>
        <taxon>Euarchontoglires</taxon>
        <taxon>Glires</taxon>
        <taxon>Rodentia</taxon>
        <taxon>Myomorpha</taxon>
        <taxon>Muroidea</taxon>
        <taxon>Muridae</taxon>
        <taxon>Murinae</taxon>
        <taxon>Mus</taxon>
        <taxon>Mus</taxon>
    </lineage>
</organism>
<feature type="chain" id="PRO_0000049306" description="Homeobox protein SIX5">
    <location>
        <begin position="1"/>
        <end position="719"/>
    </location>
</feature>
<feature type="DNA-binding region" description="Homeobox" evidence="2">
    <location>
        <begin position="194"/>
        <end position="253"/>
    </location>
</feature>
<feature type="region of interest" description="Disordered" evidence="3">
    <location>
        <begin position="1"/>
        <end position="73"/>
    </location>
</feature>
<feature type="region of interest" description="Disordered" evidence="3">
    <location>
        <begin position="241"/>
        <end position="287"/>
    </location>
</feature>
<feature type="compositionally biased region" description="Low complexity" evidence="3">
    <location>
        <begin position="1"/>
        <end position="22"/>
    </location>
</feature>
<feature type="compositionally biased region" description="Low complexity" evidence="3">
    <location>
        <begin position="31"/>
        <end position="65"/>
    </location>
</feature>
<feature type="compositionally biased region" description="Basic and acidic residues" evidence="3">
    <location>
        <begin position="272"/>
        <end position="282"/>
    </location>
</feature>
<keyword id="KW-0010">Activator</keyword>
<keyword id="KW-0217">Developmental protein</keyword>
<keyword id="KW-0238">DNA-binding</keyword>
<keyword id="KW-0371">Homeobox</keyword>
<keyword id="KW-0539">Nucleus</keyword>
<keyword id="KW-1185">Reference proteome</keyword>
<keyword id="KW-0804">Transcription</keyword>
<keyword id="KW-0805">Transcription regulation</keyword>
<name>SIX5_MOUSE</name>
<proteinExistence type="evidence at protein level"/>
<gene>
    <name type="primary">Six5</name>
    <name type="synonym">Dmahp</name>
</gene>
<comment type="function">
    <text evidence="1 4">Transcription factor that is thought to be involved in regulation of organogenesis. May be involved in determination and maintenance of retina formation. Binds a 5'-GGTGTCAG-3' motif present in the ARE regulatory element of ATP1A1. Binds a 5'-TCA[AG][AG]TTNC-3' motif present in the MEF3 element in the myogenin promoter, and in the IGFBP5 promoter (By similarity). Thought to be regulated by association with Dach and Eya proteins, and seems to be coactivated by EYA1, EYA2 and EYA3.</text>
</comment>
<comment type="subunit">
    <text evidence="4 5">Probably binds DNA dimer. Interacts with EYA3, and probably EYA1 and EYA2.</text>
</comment>
<comment type="subcellular location">
    <subcellularLocation>
        <location evidence="2">Nucleus</location>
    </subcellularLocation>
</comment>
<comment type="similarity">
    <text evidence="6">Belongs to the SIX/Sine oculis homeobox family.</text>
</comment>